<evidence type="ECO:0000255" key="1">
    <source>
        <dbReference type="HAMAP-Rule" id="MF_00076"/>
    </source>
</evidence>
<reference key="1">
    <citation type="journal article" date="2007" name="Nat. Biotechnol.">
        <title>Complete genome sequence of the erythromycin-producing bacterium Saccharopolyspora erythraea NRRL23338.</title>
        <authorList>
            <person name="Oliynyk M."/>
            <person name="Samborskyy M."/>
            <person name="Lester J.B."/>
            <person name="Mironenko T."/>
            <person name="Scott N."/>
            <person name="Dickens S."/>
            <person name="Haydock S.F."/>
            <person name="Leadlay P.F."/>
        </authorList>
    </citation>
    <scope>NUCLEOTIDE SEQUENCE [LARGE SCALE GENOMIC DNA]</scope>
    <source>
        <strain>ATCC 11635 / DSM 40517 / JCM 4748 / NBRC 13426 / NCIMB 8594 / NRRL 2338</strain>
    </source>
</reference>
<protein>
    <recommendedName>
        <fullName evidence="1">Imidazoleglycerol-phosphate dehydratase</fullName>
        <shortName evidence="1">IGPD</shortName>
        <ecNumber evidence="1">4.2.1.19</ecNumber>
    </recommendedName>
</protein>
<proteinExistence type="inferred from homology"/>
<sequence>MTAMQPGTRVGRVERTTRESSVLVELDLDGTGQVDIDTTVPFYDHMLTALGTHAAFDLKVKSSGDVHIDAHHTVEDTAIVFGQALRQALGGKLGIRRFGDAWIPMDETLAHAAVDVSGRSYCVMTGEPEQYNSFTIGGNYPFVLNRHVFESIAFHSQINLHVRVIHGRDPHHIAEAQYKAIARALRAAVEPDPRFSGVVPSTKGAL</sequence>
<comment type="catalytic activity">
    <reaction evidence="1">
        <text>D-erythro-1-(imidazol-4-yl)glycerol 3-phosphate = 3-(imidazol-4-yl)-2-oxopropyl phosphate + H2O</text>
        <dbReference type="Rhea" id="RHEA:11040"/>
        <dbReference type="ChEBI" id="CHEBI:15377"/>
        <dbReference type="ChEBI" id="CHEBI:57766"/>
        <dbReference type="ChEBI" id="CHEBI:58278"/>
        <dbReference type="EC" id="4.2.1.19"/>
    </reaction>
</comment>
<comment type="pathway">
    <text evidence="1">Amino-acid biosynthesis; L-histidine biosynthesis; L-histidine from 5-phospho-alpha-D-ribose 1-diphosphate: step 6/9.</text>
</comment>
<comment type="subcellular location">
    <subcellularLocation>
        <location evidence="1">Cytoplasm</location>
    </subcellularLocation>
</comment>
<comment type="similarity">
    <text evidence="1">Belongs to the imidazoleglycerol-phosphate dehydratase family.</text>
</comment>
<organism>
    <name type="scientific">Saccharopolyspora erythraea (strain ATCC 11635 / DSM 40517 / JCM 4748 / NBRC 13426 / NCIMB 8594 / NRRL 2338)</name>
    <dbReference type="NCBI Taxonomy" id="405948"/>
    <lineage>
        <taxon>Bacteria</taxon>
        <taxon>Bacillati</taxon>
        <taxon>Actinomycetota</taxon>
        <taxon>Actinomycetes</taxon>
        <taxon>Pseudonocardiales</taxon>
        <taxon>Pseudonocardiaceae</taxon>
        <taxon>Saccharopolyspora</taxon>
    </lineage>
</organism>
<keyword id="KW-0028">Amino-acid biosynthesis</keyword>
<keyword id="KW-0963">Cytoplasm</keyword>
<keyword id="KW-0368">Histidine biosynthesis</keyword>
<keyword id="KW-0456">Lyase</keyword>
<keyword id="KW-1185">Reference proteome</keyword>
<accession>A4FLN6</accession>
<name>HIS7_SACEN</name>
<dbReference type="EC" id="4.2.1.19" evidence="1"/>
<dbReference type="EMBL" id="AM420293">
    <property type="protein sequence ID" value="CAM04961.1"/>
    <property type="molecule type" value="Genomic_DNA"/>
</dbReference>
<dbReference type="RefSeq" id="WP_009943231.1">
    <property type="nucleotide sequence ID" value="NC_009142.1"/>
</dbReference>
<dbReference type="SMR" id="A4FLN6"/>
<dbReference type="STRING" id="405948.SACE_5776"/>
<dbReference type="KEGG" id="sen:SACE_5776"/>
<dbReference type="eggNOG" id="COG0131">
    <property type="taxonomic scope" value="Bacteria"/>
</dbReference>
<dbReference type="HOGENOM" id="CLU_044308_3_0_11"/>
<dbReference type="UniPathway" id="UPA00031">
    <property type="reaction ID" value="UER00011"/>
</dbReference>
<dbReference type="Proteomes" id="UP000006728">
    <property type="component" value="Chromosome"/>
</dbReference>
<dbReference type="GO" id="GO:0005737">
    <property type="term" value="C:cytoplasm"/>
    <property type="evidence" value="ECO:0007669"/>
    <property type="project" value="UniProtKB-SubCell"/>
</dbReference>
<dbReference type="GO" id="GO:0004424">
    <property type="term" value="F:imidazoleglycerol-phosphate dehydratase activity"/>
    <property type="evidence" value="ECO:0007669"/>
    <property type="project" value="UniProtKB-UniRule"/>
</dbReference>
<dbReference type="GO" id="GO:0000105">
    <property type="term" value="P:L-histidine biosynthetic process"/>
    <property type="evidence" value="ECO:0007669"/>
    <property type="project" value="UniProtKB-UniRule"/>
</dbReference>
<dbReference type="CDD" id="cd07914">
    <property type="entry name" value="IGPD"/>
    <property type="match status" value="1"/>
</dbReference>
<dbReference type="FunFam" id="3.30.230.40:FF:000001">
    <property type="entry name" value="Imidazoleglycerol-phosphate dehydratase HisB"/>
    <property type="match status" value="1"/>
</dbReference>
<dbReference type="FunFam" id="3.30.230.40:FF:000003">
    <property type="entry name" value="Imidazoleglycerol-phosphate dehydratase HisB"/>
    <property type="match status" value="1"/>
</dbReference>
<dbReference type="Gene3D" id="3.30.230.40">
    <property type="entry name" value="Imidazole glycerol phosphate dehydratase, domain 1"/>
    <property type="match status" value="2"/>
</dbReference>
<dbReference type="HAMAP" id="MF_00076">
    <property type="entry name" value="HisB"/>
    <property type="match status" value="1"/>
</dbReference>
<dbReference type="InterPro" id="IPR038494">
    <property type="entry name" value="IGPD_sf"/>
</dbReference>
<dbReference type="InterPro" id="IPR000807">
    <property type="entry name" value="ImidazoleglycerolP_deHydtase"/>
</dbReference>
<dbReference type="InterPro" id="IPR020565">
    <property type="entry name" value="ImidazoleglycerP_deHydtase_CS"/>
</dbReference>
<dbReference type="InterPro" id="IPR020568">
    <property type="entry name" value="Ribosomal_Su5_D2-typ_SF"/>
</dbReference>
<dbReference type="NCBIfam" id="NF002110">
    <property type="entry name" value="PRK00951.1-6"/>
    <property type="match status" value="1"/>
</dbReference>
<dbReference type="NCBIfam" id="NF002111">
    <property type="entry name" value="PRK00951.2-1"/>
    <property type="match status" value="1"/>
</dbReference>
<dbReference type="NCBIfam" id="NF002114">
    <property type="entry name" value="PRK00951.2-4"/>
    <property type="match status" value="1"/>
</dbReference>
<dbReference type="PANTHER" id="PTHR23133:SF2">
    <property type="entry name" value="IMIDAZOLEGLYCEROL-PHOSPHATE DEHYDRATASE"/>
    <property type="match status" value="1"/>
</dbReference>
<dbReference type="PANTHER" id="PTHR23133">
    <property type="entry name" value="IMIDAZOLEGLYCEROL-PHOSPHATE DEHYDRATASE HIS7"/>
    <property type="match status" value="1"/>
</dbReference>
<dbReference type="Pfam" id="PF00475">
    <property type="entry name" value="IGPD"/>
    <property type="match status" value="1"/>
</dbReference>
<dbReference type="SUPFAM" id="SSF54211">
    <property type="entry name" value="Ribosomal protein S5 domain 2-like"/>
    <property type="match status" value="2"/>
</dbReference>
<dbReference type="PROSITE" id="PS00954">
    <property type="entry name" value="IGP_DEHYDRATASE_1"/>
    <property type="match status" value="1"/>
</dbReference>
<dbReference type="PROSITE" id="PS00955">
    <property type="entry name" value="IGP_DEHYDRATASE_2"/>
    <property type="match status" value="1"/>
</dbReference>
<feature type="chain" id="PRO_1000010349" description="Imidazoleglycerol-phosphate dehydratase">
    <location>
        <begin position="1"/>
        <end position="206"/>
    </location>
</feature>
<gene>
    <name evidence="1" type="primary">hisB</name>
    <name type="ordered locus">SACE_5776</name>
</gene>